<name>RNC_STRPM</name>
<comment type="function">
    <text evidence="1">Digests double-stranded RNA. Involved in the processing of primary rRNA transcript to yield the immediate precursors to the large and small rRNAs (23S and 16S). Processes some mRNAs, and tRNAs when they are encoded in the rRNA operon. Processes pre-crRNA and tracrRNA of type II CRISPR loci if present in the organism.</text>
</comment>
<comment type="catalytic activity">
    <reaction evidence="1">
        <text>Endonucleolytic cleavage to 5'-phosphomonoester.</text>
        <dbReference type="EC" id="3.1.26.3"/>
    </reaction>
</comment>
<comment type="cofactor">
    <cofactor evidence="1">
        <name>Mg(2+)</name>
        <dbReference type="ChEBI" id="CHEBI:18420"/>
    </cofactor>
</comment>
<comment type="subunit">
    <text evidence="1">Homodimer.</text>
</comment>
<comment type="subcellular location">
    <subcellularLocation>
        <location evidence="1">Cytoplasm</location>
    </subcellularLocation>
</comment>
<comment type="similarity">
    <text evidence="1">Belongs to the ribonuclease III family.</text>
</comment>
<gene>
    <name evidence="1" type="primary">rnc</name>
    <name type="synonym">acpA</name>
    <name type="ordered locus">M28_Spy0426</name>
</gene>
<feature type="chain" id="PRO_0000228591" description="Ribonuclease 3">
    <location>
        <begin position="1"/>
        <end position="230"/>
    </location>
</feature>
<feature type="domain" description="RNase III" evidence="1">
    <location>
        <begin position="1"/>
        <end position="134"/>
    </location>
</feature>
<feature type="domain" description="DRBM" evidence="1">
    <location>
        <begin position="160"/>
        <end position="229"/>
    </location>
</feature>
<feature type="active site" evidence="1">
    <location>
        <position position="51"/>
    </location>
</feature>
<feature type="active site" evidence="1">
    <location>
        <position position="123"/>
    </location>
</feature>
<feature type="binding site" evidence="1">
    <location>
        <position position="47"/>
    </location>
    <ligand>
        <name>Mg(2+)</name>
        <dbReference type="ChEBI" id="CHEBI:18420"/>
    </ligand>
</feature>
<feature type="binding site" evidence="1">
    <location>
        <position position="120"/>
    </location>
    <ligand>
        <name>Mg(2+)</name>
        <dbReference type="ChEBI" id="CHEBI:18420"/>
    </ligand>
</feature>
<feature type="binding site" evidence="1">
    <location>
        <position position="123"/>
    </location>
    <ligand>
        <name>Mg(2+)</name>
        <dbReference type="ChEBI" id="CHEBI:18420"/>
    </ligand>
</feature>
<dbReference type="EC" id="3.1.26.3" evidence="1"/>
<dbReference type="EMBL" id="CP000056">
    <property type="protein sequence ID" value="AAX71540.1"/>
    <property type="molecule type" value="Genomic_DNA"/>
</dbReference>
<dbReference type="RefSeq" id="WP_011284596.1">
    <property type="nucleotide sequence ID" value="NC_007296.2"/>
</dbReference>
<dbReference type="SMR" id="Q48UR6"/>
<dbReference type="KEGG" id="spb:M28_Spy0426"/>
<dbReference type="HOGENOM" id="CLU_000907_1_3_9"/>
<dbReference type="GO" id="GO:0005737">
    <property type="term" value="C:cytoplasm"/>
    <property type="evidence" value="ECO:0007669"/>
    <property type="project" value="UniProtKB-SubCell"/>
</dbReference>
<dbReference type="GO" id="GO:0003725">
    <property type="term" value="F:double-stranded RNA binding"/>
    <property type="evidence" value="ECO:0007669"/>
    <property type="project" value="TreeGrafter"/>
</dbReference>
<dbReference type="GO" id="GO:0046872">
    <property type="term" value="F:metal ion binding"/>
    <property type="evidence" value="ECO:0007669"/>
    <property type="project" value="UniProtKB-KW"/>
</dbReference>
<dbReference type="GO" id="GO:0004525">
    <property type="term" value="F:ribonuclease III activity"/>
    <property type="evidence" value="ECO:0007669"/>
    <property type="project" value="UniProtKB-UniRule"/>
</dbReference>
<dbReference type="GO" id="GO:0019843">
    <property type="term" value="F:rRNA binding"/>
    <property type="evidence" value="ECO:0007669"/>
    <property type="project" value="UniProtKB-KW"/>
</dbReference>
<dbReference type="GO" id="GO:0006397">
    <property type="term" value="P:mRNA processing"/>
    <property type="evidence" value="ECO:0007669"/>
    <property type="project" value="UniProtKB-UniRule"/>
</dbReference>
<dbReference type="GO" id="GO:0010468">
    <property type="term" value="P:regulation of gene expression"/>
    <property type="evidence" value="ECO:0007669"/>
    <property type="project" value="TreeGrafter"/>
</dbReference>
<dbReference type="GO" id="GO:0006364">
    <property type="term" value="P:rRNA processing"/>
    <property type="evidence" value="ECO:0007669"/>
    <property type="project" value="UniProtKB-UniRule"/>
</dbReference>
<dbReference type="GO" id="GO:0008033">
    <property type="term" value="P:tRNA processing"/>
    <property type="evidence" value="ECO:0007669"/>
    <property type="project" value="UniProtKB-KW"/>
</dbReference>
<dbReference type="CDD" id="cd10845">
    <property type="entry name" value="DSRM_RNAse_III_family"/>
    <property type="match status" value="1"/>
</dbReference>
<dbReference type="CDD" id="cd00593">
    <property type="entry name" value="RIBOc"/>
    <property type="match status" value="1"/>
</dbReference>
<dbReference type="FunFam" id="1.10.1520.10:FF:000001">
    <property type="entry name" value="Ribonuclease 3"/>
    <property type="match status" value="1"/>
</dbReference>
<dbReference type="FunFam" id="3.30.160.20:FF:000003">
    <property type="entry name" value="Ribonuclease 3"/>
    <property type="match status" value="1"/>
</dbReference>
<dbReference type="Gene3D" id="3.30.160.20">
    <property type="match status" value="1"/>
</dbReference>
<dbReference type="Gene3D" id="1.10.1520.10">
    <property type="entry name" value="Ribonuclease III domain"/>
    <property type="match status" value="1"/>
</dbReference>
<dbReference type="HAMAP" id="MF_00104">
    <property type="entry name" value="RNase_III"/>
    <property type="match status" value="1"/>
</dbReference>
<dbReference type="InterPro" id="IPR014720">
    <property type="entry name" value="dsRBD_dom"/>
</dbReference>
<dbReference type="InterPro" id="IPR011907">
    <property type="entry name" value="RNase_III"/>
</dbReference>
<dbReference type="InterPro" id="IPR000999">
    <property type="entry name" value="RNase_III_dom"/>
</dbReference>
<dbReference type="InterPro" id="IPR036389">
    <property type="entry name" value="RNase_III_sf"/>
</dbReference>
<dbReference type="NCBIfam" id="TIGR02191">
    <property type="entry name" value="RNaseIII"/>
    <property type="match status" value="1"/>
</dbReference>
<dbReference type="PANTHER" id="PTHR11207:SF0">
    <property type="entry name" value="RIBONUCLEASE 3"/>
    <property type="match status" value="1"/>
</dbReference>
<dbReference type="PANTHER" id="PTHR11207">
    <property type="entry name" value="RIBONUCLEASE III"/>
    <property type="match status" value="1"/>
</dbReference>
<dbReference type="Pfam" id="PF00035">
    <property type="entry name" value="dsrm"/>
    <property type="match status" value="1"/>
</dbReference>
<dbReference type="Pfam" id="PF14622">
    <property type="entry name" value="Ribonucleas_3_3"/>
    <property type="match status" value="1"/>
</dbReference>
<dbReference type="SMART" id="SM00358">
    <property type="entry name" value="DSRM"/>
    <property type="match status" value="1"/>
</dbReference>
<dbReference type="SMART" id="SM00535">
    <property type="entry name" value="RIBOc"/>
    <property type="match status" value="1"/>
</dbReference>
<dbReference type="SUPFAM" id="SSF54768">
    <property type="entry name" value="dsRNA-binding domain-like"/>
    <property type="match status" value="1"/>
</dbReference>
<dbReference type="SUPFAM" id="SSF69065">
    <property type="entry name" value="RNase III domain-like"/>
    <property type="match status" value="1"/>
</dbReference>
<dbReference type="PROSITE" id="PS50137">
    <property type="entry name" value="DS_RBD"/>
    <property type="match status" value="1"/>
</dbReference>
<dbReference type="PROSITE" id="PS00517">
    <property type="entry name" value="RNASE_3_1"/>
    <property type="match status" value="1"/>
</dbReference>
<dbReference type="PROSITE" id="PS50142">
    <property type="entry name" value="RNASE_3_2"/>
    <property type="match status" value="1"/>
</dbReference>
<organism>
    <name type="scientific">Streptococcus pyogenes serotype M28 (strain MGAS6180)</name>
    <dbReference type="NCBI Taxonomy" id="319701"/>
    <lineage>
        <taxon>Bacteria</taxon>
        <taxon>Bacillati</taxon>
        <taxon>Bacillota</taxon>
        <taxon>Bacilli</taxon>
        <taxon>Lactobacillales</taxon>
        <taxon>Streptococcaceae</taxon>
        <taxon>Streptococcus</taxon>
    </lineage>
</organism>
<proteinExistence type="inferred from homology"/>
<reference key="1">
    <citation type="journal article" date="2005" name="J. Infect. Dis.">
        <title>Genome sequence of a serotype M28 strain of group A Streptococcus: potential new insights into puerperal sepsis and bacterial disease specificity.</title>
        <authorList>
            <person name="Green N.M."/>
            <person name="Zhang S."/>
            <person name="Porcella S.F."/>
            <person name="Nagiec M.J."/>
            <person name="Barbian K.D."/>
            <person name="Beres S.B."/>
            <person name="Lefebvre R.B."/>
            <person name="Musser J.M."/>
        </authorList>
    </citation>
    <scope>NUCLEOTIDE SEQUENCE [LARGE SCALE GENOMIC DNA]</scope>
    <source>
        <strain>MGAS6180</strain>
    </source>
</reference>
<protein>
    <recommendedName>
        <fullName evidence="1">Ribonuclease 3</fullName>
        <ecNumber evidence="1">3.1.26.3</ecNumber>
    </recommendedName>
    <alternativeName>
        <fullName evidence="1">Ribonuclease III</fullName>
        <shortName evidence="1">RNase III</shortName>
    </alternativeName>
</protein>
<evidence type="ECO:0000255" key="1">
    <source>
        <dbReference type="HAMAP-Rule" id="MF_00104"/>
    </source>
</evidence>
<accession>Q48UR6</accession>
<keyword id="KW-0963">Cytoplasm</keyword>
<keyword id="KW-0255">Endonuclease</keyword>
<keyword id="KW-0378">Hydrolase</keyword>
<keyword id="KW-0460">Magnesium</keyword>
<keyword id="KW-0479">Metal-binding</keyword>
<keyword id="KW-0507">mRNA processing</keyword>
<keyword id="KW-0540">Nuclease</keyword>
<keyword id="KW-0694">RNA-binding</keyword>
<keyword id="KW-0698">rRNA processing</keyword>
<keyword id="KW-0699">rRNA-binding</keyword>
<keyword id="KW-0819">tRNA processing</keyword>
<sequence length="230" mass="25876">MKQLEELLSTSFDIQFNDLTLLETAFTHTSYANEHRLLNVSHNERLEFLGDAVLQLIISEYLFAKYPKKTEGDMSKLRSMIVREESLAGFSRFCSFDAYIKLGKGEEKSGGRRRDTILGDLFEAFLGALLLDKGIDAVRRFLKQVMIPQVEKGNFERVRDYKTCLQEFLQTKGDVAIDYQVISEKGPAHAKQFEVSIVVNGAVLSKGLGKSKKLAEQDAAKNALAQLSEV</sequence>